<keyword id="KW-1015">Disulfide bond</keyword>
<keyword id="KW-0325">Glycoprotein</keyword>
<keyword id="KW-0328">Glycosyltransferase</keyword>
<keyword id="KW-0472">Membrane</keyword>
<keyword id="KW-0732">Signal</keyword>
<keyword id="KW-0808">Transferase</keyword>
<keyword id="KW-0812">Transmembrane</keyword>
<keyword id="KW-1133">Transmembrane helix</keyword>
<feature type="signal peptide" evidence="1">
    <location>
        <begin position="1"/>
        <end position="26"/>
    </location>
</feature>
<feature type="chain" id="PRO_5003588518" description="Peptidyl serine alpha-galactosyltransferase">
    <location>
        <begin position="27"/>
        <end position="748"/>
    </location>
</feature>
<feature type="topological domain" description="Extracellular" evidence="7">
    <location>
        <begin position="27"/>
        <end position="710"/>
    </location>
</feature>
<feature type="transmembrane region" description="Helical" evidence="1">
    <location>
        <begin position="711"/>
        <end position="731"/>
    </location>
</feature>
<feature type="topological domain" description="Cytoplasmic" evidence="7">
    <location>
        <begin position="732"/>
        <end position="748"/>
    </location>
</feature>
<feature type="domain" description="ShKT" evidence="3">
    <location>
        <begin position="415"/>
        <end position="449"/>
    </location>
</feature>
<feature type="region of interest" description="Disordered" evidence="4">
    <location>
        <begin position="474"/>
        <end position="576"/>
    </location>
</feature>
<feature type="region of interest" description="Disordered" evidence="4">
    <location>
        <begin position="611"/>
        <end position="670"/>
    </location>
</feature>
<feature type="compositionally biased region" description="Pro residues" evidence="4">
    <location>
        <begin position="531"/>
        <end position="565"/>
    </location>
</feature>
<feature type="compositionally biased region" description="Basic and acidic residues" evidence="4">
    <location>
        <begin position="611"/>
        <end position="637"/>
    </location>
</feature>
<feature type="glycosylation site" description="N-linked (GlcNAc...) asparagine" evidence="2">
    <location>
        <position position="33"/>
    </location>
</feature>
<feature type="glycosylation site" description="N-linked (GlcNAc...) asparagine" evidence="2">
    <location>
        <position position="184"/>
    </location>
</feature>
<feature type="glycosylation site" description="N-linked (GlcNAc...) asparagine" evidence="2">
    <location>
        <position position="297"/>
    </location>
</feature>
<feature type="disulfide bond" evidence="3">
    <location>
        <begin position="415"/>
        <end position="449"/>
    </location>
</feature>
<feature type="disulfide bond" evidence="3">
    <location>
        <begin position="422"/>
        <end position="442"/>
    </location>
</feature>
<feature type="disulfide bond" evidence="3">
    <location>
        <begin position="431"/>
        <end position="446"/>
    </location>
</feature>
<reference key="1">
    <citation type="journal article" date="2014" name="J. Biol. Chem.">
        <title>Identification of a novel peptidyl serine alpha-galactosyltransferase gene family in plants.</title>
        <authorList>
            <person name="Saito F."/>
            <person name="Suyama A."/>
            <person name="Oka T."/>
            <person name="Yoko-o T."/>
            <person name="Matsuoka K."/>
            <person name="Jigami Y."/>
            <person name="Shimma Y."/>
        </authorList>
    </citation>
    <scope>NUCLEOTIDE SEQUENCE [MRNA]</scope>
    <scope>FUNCTION</scope>
    <scope>COFACTOR</scope>
    <scope>BIOPHYSICOCHEMICAL PROPERTIES</scope>
</reference>
<name>SRGT1_CHLRE</name>
<evidence type="ECO:0000255" key="1"/>
<evidence type="ECO:0000255" key="2">
    <source>
        <dbReference type="PROSITE-ProRule" id="PRU00498"/>
    </source>
</evidence>
<evidence type="ECO:0000255" key="3">
    <source>
        <dbReference type="PROSITE-ProRule" id="PRU01005"/>
    </source>
</evidence>
<evidence type="ECO:0000256" key="4">
    <source>
        <dbReference type="SAM" id="MobiDB-lite"/>
    </source>
</evidence>
<evidence type="ECO:0000269" key="5">
    <source>
    </source>
</evidence>
<evidence type="ECO:0000303" key="6">
    <source>
    </source>
</evidence>
<evidence type="ECO:0000305" key="7"/>
<evidence type="ECO:0000312" key="8">
    <source>
        <dbReference type="EMBL" id="BAL63043.1"/>
    </source>
</evidence>
<gene>
    <name evidence="6" type="primary">SGT1</name>
</gene>
<comment type="function">
    <text evidence="5">Glycosyltransferase involved in the O-galactosylation of several proteins including extensins. Catalyzes the transfer of alpha-galactosyl to Ser residues. Hydroxylation of proline residues adjacent to the serine acceptor is required for activity. Utilizes selectively UDP-galactose as a donor nucleotide sugar.</text>
</comment>
<comment type="cofactor">
    <cofactor evidence="5">
        <name>Mn(2+)</name>
        <dbReference type="ChEBI" id="CHEBI:29035"/>
    </cofactor>
    <text evidence="5">Weak activity with Fe(2+), Co(2+) and Zn(2+), but no activity with Ca(2+), Mg(2+) or Cu(2+).</text>
</comment>
<comment type="biophysicochemical properties">
    <phDependence>
        <text evidence="5">Optimum pH is 6.0.</text>
    </phDependence>
    <temperatureDependence>
        <text evidence="5">Optimum temperature is 30 degrees Celsius.</text>
    </temperatureDependence>
</comment>
<comment type="subcellular location">
    <subcellularLocation>
        <location evidence="1">Membrane</location>
        <topology evidence="1">Single-pass type I membrane protein</topology>
    </subcellularLocation>
</comment>
<accession>H3JU05</accession>
<proteinExistence type="evidence at protein level"/>
<dbReference type="EC" id="2.4.1.-" evidence="7"/>
<dbReference type="EMBL" id="AB617522">
    <property type="protein sequence ID" value="BAL63043.1"/>
    <property type="molecule type" value="mRNA"/>
</dbReference>
<dbReference type="SMR" id="H3JU05"/>
<dbReference type="GlyCosmos" id="H3JU05">
    <property type="glycosylation" value="3 sites, No reported glycans"/>
</dbReference>
<dbReference type="GO" id="GO:0016020">
    <property type="term" value="C:membrane"/>
    <property type="evidence" value="ECO:0007669"/>
    <property type="project" value="UniProtKB-SubCell"/>
</dbReference>
<dbReference type="GO" id="GO:0016757">
    <property type="term" value="F:glycosyltransferase activity"/>
    <property type="evidence" value="ECO:0007669"/>
    <property type="project" value="UniProtKB-KW"/>
</dbReference>
<dbReference type="Gene3D" id="1.10.10.1940">
    <property type="match status" value="1"/>
</dbReference>
<dbReference type="InterPro" id="IPR056508">
    <property type="entry name" value="HPAT-like"/>
</dbReference>
<dbReference type="InterPro" id="IPR044845">
    <property type="entry name" value="HPAT/SRGT1-like"/>
</dbReference>
<dbReference type="InterPro" id="IPR003582">
    <property type="entry name" value="ShKT_dom"/>
</dbReference>
<dbReference type="PANTHER" id="PTHR31485">
    <property type="entry name" value="PEPTIDYL SERINE ALPHA-GALACTOSYLTRANSFERASE"/>
    <property type="match status" value="1"/>
</dbReference>
<dbReference type="PANTHER" id="PTHR31485:SF7">
    <property type="entry name" value="PEPTIDYL SERINE ALPHA-GALACTOSYLTRANSFERASE"/>
    <property type="match status" value="1"/>
</dbReference>
<dbReference type="Pfam" id="PF23452">
    <property type="entry name" value="HPAT"/>
    <property type="match status" value="1"/>
</dbReference>
<dbReference type="Pfam" id="PF01549">
    <property type="entry name" value="ShK"/>
    <property type="match status" value="1"/>
</dbReference>
<dbReference type="SMART" id="SM00254">
    <property type="entry name" value="ShKT"/>
    <property type="match status" value="1"/>
</dbReference>
<dbReference type="PROSITE" id="PS51670">
    <property type="entry name" value="SHKT"/>
    <property type="match status" value="1"/>
</dbReference>
<sequence>MVAVFHGPLVLGALLLLLALQHGASAEEPGFANRTGVHVAFLTDCQMYSDWQSVGAAFSFKMSGQPGSVIRVMCCSEEQAKNYNKGLLGMVDTWVAPDATHSKRTGDRYAAYNKPEAVIDWLDHNVPKHDYVLVLDSDMVLRRPFFVENMGPRKGLAVGARYTYMIGVANELAVRHIPHVPPRNDTLAGPFGRRADQVGGFFFIHKDDLKAMSHDWLKFSEDVRVDDQAYRLSGDVYAIHPGDRPWISEMYGYAFGAANHNVWHKWDTFSMIYPGYEPREGIPKLMHYGLLFEIGKNYSFDKHWHYDFDVTVCPPWDLKDPKRRTHGIFPEPPRPSSLRKVFPKNGDMASMDDFIGYYKELLAIETLATLNAAFCDYHISHCPPSEQLVSVCKEVFSLYNEAREFIQEAEASYDCQDFHPKCEEWKESGECTKNENYMTENCRKTCDKCNKIEKFFPETTTKELEEKLAKMSKELQPLSEDPDNKAGAGSAPKTESPLVIPKQEQPVAIIPRNEVPPKQEVRASSPAMQSSPPPSPPPASPPPVDSPPPMSPPPESPSPDKPPPKVVTRKALADPKKVTQKALMVRCYKLSLGIDEVKDCVKAAKEGKEYEVPKRTKATDEEEEAPKAKHAESHLTLDGEGATTESANDEVAKTKAPDASAEGNEGKKNIRVVQRDLEDLSLTQGDGKKGKAPVIDAPVVGPSLHSLLGRLNTWQALVLWLVVVVAFLALVPRIAKLRRRQRSGMRTE</sequence>
<organism evidence="8">
    <name type="scientific">Chlamydomonas reinhardtii</name>
    <name type="common">Chlamydomonas smithii</name>
    <dbReference type="NCBI Taxonomy" id="3055"/>
    <lineage>
        <taxon>Eukaryota</taxon>
        <taxon>Viridiplantae</taxon>
        <taxon>Chlorophyta</taxon>
        <taxon>core chlorophytes</taxon>
        <taxon>Chlorophyceae</taxon>
        <taxon>CS clade</taxon>
        <taxon>Chlamydomonadales</taxon>
        <taxon>Chlamydomonadaceae</taxon>
        <taxon>Chlamydomonas</taxon>
    </lineage>
</organism>
<protein>
    <recommendedName>
        <fullName evidence="6">Peptidyl serine alpha-galactosyltransferase</fullName>
        <shortName evidence="6">CrSGT1</shortName>
        <ecNumber evidence="7">2.4.1.-</ecNumber>
    </recommendedName>
</protein>